<reference key="1">
    <citation type="journal article" date="2007" name="Curr. Biol.">
        <title>Reduced genome of the thioautotrophic intracellular symbiont in a deep-sea clam, Calyptogena okutanii.</title>
        <authorList>
            <person name="Kuwahara H."/>
            <person name="Yoshida T."/>
            <person name="Takaki Y."/>
            <person name="Shimamura S."/>
            <person name="Nishi S."/>
            <person name="Harada M."/>
            <person name="Matsuyama K."/>
            <person name="Takishita K."/>
            <person name="Kawato M."/>
            <person name="Uematsu K."/>
            <person name="Fujiwara Y."/>
            <person name="Sato T."/>
            <person name="Kato C."/>
            <person name="Kitagawa M."/>
            <person name="Kato I."/>
            <person name="Maruyama T."/>
        </authorList>
    </citation>
    <scope>NUCLEOTIDE SEQUENCE [LARGE SCALE GENOMIC DNA]</scope>
    <source>
        <strain>HA</strain>
    </source>
</reference>
<feature type="chain" id="PRO_0000414813" description="23S rRNA (uracil(1939)-C(5))-methyltransferase RlmD">
    <location>
        <begin position="1"/>
        <end position="439"/>
    </location>
</feature>
<feature type="domain" description="TRAM" evidence="1">
    <location>
        <begin position="5"/>
        <end position="63"/>
    </location>
</feature>
<feature type="active site" description="Nucleophile" evidence="1">
    <location>
        <position position="396"/>
    </location>
</feature>
<feature type="binding site" evidence="1">
    <location>
        <position position="76"/>
    </location>
    <ligand>
        <name>[4Fe-4S] cluster</name>
        <dbReference type="ChEBI" id="CHEBI:49883"/>
    </ligand>
</feature>
<feature type="binding site" evidence="1">
    <location>
        <position position="82"/>
    </location>
    <ligand>
        <name>[4Fe-4S] cluster</name>
        <dbReference type="ChEBI" id="CHEBI:49883"/>
    </ligand>
</feature>
<feature type="binding site" evidence="1">
    <location>
        <position position="85"/>
    </location>
    <ligand>
        <name>[4Fe-4S] cluster</name>
        <dbReference type="ChEBI" id="CHEBI:49883"/>
    </ligand>
</feature>
<feature type="binding site" evidence="1">
    <location>
        <position position="164"/>
    </location>
    <ligand>
        <name>[4Fe-4S] cluster</name>
        <dbReference type="ChEBI" id="CHEBI:49883"/>
    </ligand>
</feature>
<feature type="binding site" evidence="1">
    <location>
        <position position="271"/>
    </location>
    <ligand>
        <name>S-adenosyl-L-methionine</name>
        <dbReference type="ChEBI" id="CHEBI:59789"/>
    </ligand>
</feature>
<feature type="binding site" evidence="1">
    <location>
        <position position="300"/>
    </location>
    <ligand>
        <name>S-adenosyl-L-methionine</name>
        <dbReference type="ChEBI" id="CHEBI:59789"/>
    </ligand>
</feature>
<feature type="binding site" evidence="1">
    <location>
        <position position="305"/>
    </location>
    <ligand>
        <name>S-adenosyl-L-methionine</name>
        <dbReference type="ChEBI" id="CHEBI:59789"/>
    </ligand>
</feature>
<feature type="binding site" evidence="1">
    <location>
        <position position="321"/>
    </location>
    <ligand>
        <name>S-adenosyl-L-methionine</name>
        <dbReference type="ChEBI" id="CHEBI:59789"/>
    </ligand>
</feature>
<feature type="binding site" evidence="1">
    <location>
        <position position="348"/>
    </location>
    <ligand>
        <name>S-adenosyl-L-methionine</name>
        <dbReference type="ChEBI" id="CHEBI:59789"/>
    </ligand>
</feature>
<feature type="binding site" evidence="1">
    <location>
        <position position="370"/>
    </location>
    <ligand>
        <name>S-adenosyl-L-methionine</name>
        <dbReference type="ChEBI" id="CHEBI:59789"/>
    </ligand>
</feature>
<proteinExistence type="inferred from homology"/>
<protein>
    <recommendedName>
        <fullName evidence="1">23S rRNA (uracil(1939)-C(5))-methyltransferase RlmD</fullName>
        <ecNumber evidence="1">2.1.1.190</ecNumber>
    </recommendedName>
    <alternativeName>
        <fullName evidence="1">23S rRNA(m5U1939)-methyltransferase</fullName>
    </alternativeName>
</protein>
<name>RLMD_VESOH</name>
<dbReference type="EC" id="2.1.1.190" evidence="1"/>
<dbReference type="EMBL" id="AP009247">
    <property type="protein sequence ID" value="BAF61426.1"/>
    <property type="molecule type" value="Genomic_DNA"/>
</dbReference>
<dbReference type="RefSeq" id="WP_011929696.1">
    <property type="nucleotide sequence ID" value="NC_009465.1"/>
</dbReference>
<dbReference type="SMR" id="A5CXB2"/>
<dbReference type="STRING" id="412965.COSY_0298"/>
<dbReference type="KEGG" id="vok:COSY_0298"/>
<dbReference type="eggNOG" id="COG2265">
    <property type="taxonomic scope" value="Bacteria"/>
</dbReference>
<dbReference type="HOGENOM" id="CLU_014689_8_2_6"/>
<dbReference type="OrthoDB" id="9804590at2"/>
<dbReference type="Proteomes" id="UP000000247">
    <property type="component" value="Chromosome"/>
</dbReference>
<dbReference type="GO" id="GO:0051539">
    <property type="term" value="F:4 iron, 4 sulfur cluster binding"/>
    <property type="evidence" value="ECO:0007669"/>
    <property type="project" value="UniProtKB-KW"/>
</dbReference>
<dbReference type="GO" id="GO:0005506">
    <property type="term" value="F:iron ion binding"/>
    <property type="evidence" value="ECO:0007669"/>
    <property type="project" value="UniProtKB-UniRule"/>
</dbReference>
<dbReference type="GO" id="GO:0003723">
    <property type="term" value="F:RNA binding"/>
    <property type="evidence" value="ECO:0007669"/>
    <property type="project" value="InterPro"/>
</dbReference>
<dbReference type="GO" id="GO:0070041">
    <property type="term" value="F:rRNA (uridine-C5-)-methyltransferase activity"/>
    <property type="evidence" value="ECO:0007669"/>
    <property type="project" value="UniProtKB-UniRule"/>
</dbReference>
<dbReference type="GO" id="GO:0070475">
    <property type="term" value="P:rRNA base methylation"/>
    <property type="evidence" value="ECO:0007669"/>
    <property type="project" value="TreeGrafter"/>
</dbReference>
<dbReference type="CDD" id="cd02440">
    <property type="entry name" value="AdoMet_MTases"/>
    <property type="match status" value="1"/>
</dbReference>
<dbReference type="Gene3D" id="2.40.50.1070">
    <property type="match status" value="1"/>
</dbReference>
<dbReference type="Gene3D" id="2.40.50.140">
    <property type="entry name" value="Nucleic acid-binding proteins"/>
    <property type="match status" value="1"/>
</dbReference>
<dbReference type="Gene3D" id="3.40.50.150">
    <property type="entry name" value="Vaccinia Virus protein VP39"/>
    <property type="match status" value="1"/>
</dbReference>
<dbReference type="HAMAP" id="MF_01010">
    <property type="entry name" value="23SrRNA_methyltr_RlmD"/>
    <property type="match status" value="1"/>
</dbReference>
<dbReference type="InterPro" id="IPR001566">
    <property type="entry name" value="23S_rRNA_MeTrfase_RlmD"/>
</dbReference>
<dbReference type="InterPro" id="IPR030390">
    <property type="entry name" value="MeTrfase_TrmA_AS"/>
</dbReference>
<dbReference type="InterPro" id="IPR030391">
    <property type="entry name" value="MeTrfase_TrmA_CS"/>
</dbReference>
<dbReference type="InterPro" id="IPR012340">
    <property type="entry name" value="NA-bd_OB-fold"/>
</dbReference>
<dbReference type="InterPro" id="IPR029063">
    <property type="entry name" value="SAM-dependent_MTases_sf"/>
</dbReference>
<dbReference type="InterPro" id="IPR002792">
    <property type="entry name" value="TRAM_dom"/>
</dbReference>
<dbReference type="InterPro" id="IPR010280">
    <property type="entry name" value="U5_MeTrfase_fam"/>
</dbReference>
<dbReference type="NCBIfam" id="NF009639">
    <property type="entry name" value="PRK13168.1"/>
    <property type="match status" value="1"/>
</dbReference>
<dbReference type="PANTHER" id="PTHR11061:SF49">
    <property type="entry name" value="23S RRNA (URACIL(1939)-C(5))-METHYLTRANSFERASE RLMD"/>
    <property type="match status" value="1"/>
</dbReference>
<dbReference type="PANTHER" id="PTHR11061">
    <property type="entry name" value="RNA M5U METHYLTRANSFERASE"/>
    <property type="match status" value="1"/>
</dbReference>
<dbReference type="Pfam" id="PF01938">
    <property type="entry name" value="TRAM"/>
    <property type="match status" value="1"/>
</dbReference>
<dbReference type="Pfam" id="PF05958">
    <property type="entry name" value="tRNA_U5-meth_tr"/>
    <property type="match status" value="1"/>
</dbReference>
<dbReference type="SUPFAM" id="SSF50249">
    <property type="entry name" value="Nucleic acid-binding proteins"/>
    <property type="match status" value="1"/>
</dbReference>
<dbReference type="SUPFAM" id="SSF53335">
    <property type="entry name" value="S-adenosyl-L-methionine-dependent methyltransferases"/>
    <property type="match status" value="1"/>
</dbReference>
<dbReference type="PROSITE" id="PS51687">
    <property type="entry name" value="SAM_MT_RNA_M5U"/>
    <property type="match status" value="1"/>
</dbReference>
<dbReference type="PROSITE" id="PS50926">
    <property type="entry name" value="TRAM"/>
    <property type="match status" value="1"/>
</dbReference>
<dbReference type="PROSITE" id="PS01230">
    <property type="entry name" value="TRMA_1"/>
    <property type="match status" value="1"/>
</dbReference>
<dbReference type="PROSITE" id="PS01231">
    <property type="entry name" value="TRMA_2"/>
    <property type="match status" value="1"/>
</dbReference>
<keyword id="KW-0004">4Fe-4S</keyword>
<keyword id="KW-0408">Iron</keyword>
<keyword id="KW-0411">Iron-sulfur</keyword>
<keyword id="KW-0479">Metal-binding</keyword>
<keyword id="KW-0489">Methyltransferase</keyword>
<keyword id="KW-1185">Reference proteome</keyword>
<keyword id="KW-0698">rRNA processing</keyword>
<keyword id="KW-0949">S-adenosyl-L-methionine</keyword>
<keyword id="KW-0808">Transferase</keyword>
<sequence length="439" mass="49838">MRRRRKLEHKTYKLNIESFSHEGRGIAHFEDKIIFVSDALPGELVIANRTFSCAKFEEADAKEILKPADNRMKPKCDVFGICGGCSFQNLSSEDQIQIKSRWLKKVFARQAKVEPETWLKSLQFQSWGYRRKARLGIRYVAKKDKVLIGFRERKSSFITNMSRCEVLHPSIGEHLEVLANCIERLSIKSSIPQFEVVISESGIALILRHLESLSVKDEKILADCAQELNITFYTQSGGLDSVKPLDEPTILTYSHSNYNIIMEFLPTDFVQVNFKLNQQMVSLAVELLELNESDKVIDLFCGLGNFTLPIARYAKYVVGIEGDLGLVERAKYNAEKNSINNVDFYRSDLCKEVVGFEWFKGKTYNKALIDPSRSGAIEIVELLPKLGVTRLVYVSCNPATLARDTLKLIKLGFTLETAGVIDMFPQTSHVESIALFVKR</sequence>
<organism>
    <name type="scientific">Vesicomyosocius okutanii subsp. Calyptogena okutanii (strain HA)</name>
    <dbReference type="NCBI Taxonomy" id="412965"/>
    <lineage>
        <taxon>Bacteria</taxon>
        <taxon>Pseudomonadati</taxon>
        <taxon>Pseudomonadota</taxon>
        <taxon>Gammaproteobacteria</taxon>
        <taxon>Candidatus Pseudothioglobaceae</taxon>
        <taxon>Candidatus Vesicomyosocius</taxon>
    </lineage>
</organism>
<comment type="function">
    <text evidence="1">Catalyzes the formation of 5-methyl-uridine at position 1939 (m5U1939) in 23S rRNA.</text>
</comment>
<comment type="catalytic activity">
    <reaction evidence="1">
        <text>uridine(1939) in 23S rRNA + S-adenosyl-L-methionine = 5-methyluridine(1939) in 23S rRNA + S-adenosyl-L-homocysteine + H(+)</text>
        <dbReference type="Rhea" id="RHEA:42908"/>
        <dbReference type="Rhea" id="RHEA-COMP:10278"/>
        <dbReference type="Rhea" id="RHEA-COMP:10279"/>
        <dbReference type="ChEBI" id="CHEBI:15378"/>
        <dbReference type="ChEBI" id="CHEBI:57856"/>
        <dbReference type="ChEBI" id="CHEBI:59789"/>
        <dbReference type="ChEBI" id="CHEBI:65315"/>
        <dbReference type="ChEBI" id="CHEBI:74447"/>
        <dbReference type="EC" id="2.1.1.190"/>
    </reaction>
</comment>
<comment type="similarity">
    <text evidence="1">Belongs to the class I-like SAM-binding methyltransferase superfamily. RNA M5U methyltransferase family. RlmD subfamily.</text>
</comment>
<evidence type="ECO:0000255" key="1">
    <source>
        <dbReference type="HAMAP-Rule" id="MF_01010"/>
    </source>
</evidence>
<accession>A5CXB2</accession>
<gene>
    <name evidence="1" type="primary">rlmD</name>
    <name type="ordered locus">COSY_0298</name>
</gene>